<feature type="chain" id="PRO_0000433475" description="Protein LITTLE ZIPPER 3">
    <location>
        <begin position="1"/>
        <end position="67"/>
    </location>
</feature>
<feature type="region of interest" description="Disordered" evidence="2">
    <location>
        <begin position="42"/>
        <end position="67"/>
    </location>
</feature>
<feature type="coiled-coil region" evidence="1">
    <location>
        <begin position="14"/>
        <end position="59"/>
    </location>
</feature>
<reference key="1">
    <citation type="journal article" date="2000" name="Nature">
        <title>Sequence and analysis of chromosome 3 of the plant Arabidopsis thaliana.</title>
        <authorList>
            <person name="Salanoubat M."/>
            <person name="Lemcke K."/>
            <person name="Rieger M."/>
            <person name="Ansorge W."/>
            <person name="Unseld M."/>
            <person name="Fartmann B."/>
            <person name="Valle G."/>
            <person name="Bloecker H."/>
            <person name="Perez-Alonso M."/>
            <person name="Obermaier B."/>
            <person name="Delseny M."/>
            <person name="Boutry M."/>
            <person name="Grivell L.A."/>
            <person name="Mache R."/>
            <person name="Puigdomenech P."/>
            <person name="De Simone V."/>
            <person name="Choisne N."/>
            <person name="Artiguenave F."/>
            <person name="Robert C."/>
            <person name="Brottier P."/>
            <person name="Wincker P."/>
            <person name="Cattolico L."/>
            <person name="Weissenbach J."/>
            <person name="Saurin W."/>
            <person name="Quetier F."/>
            <person name="Schaefer M."/>
            <person name="Mueller-Auer S."/>
            <person name="Gabel C."/>
            <person name="Fuchs M."/>
            <person name="Benes V."/>
            <person name="Wurmbach E."/>
            <person name="Drzonek H."/>
            <person name="Erfle H."/>
            <person name="Jordan N."/>
            <person name="Bangert S."/>
            <person name="Wiedelmann R."/>
            <person name="Kranz H."/>
            <person name="Voss H."/>
            <person name="Holland R."/>
            <person name="Brandt P."/>
            <person name="Nyakatura G."/>
            <person name="Vezzi A."/>
            <person name="D'Angelo M."/>
            <person name="Pallavicini A."/>
            <person name="Toppo S."/>
            <person name="Simionati B."/>
            <person name="Conrad A."/>
            <person name="Hornischer K."/>
            <person name="Kauer G."/>
            <person name="Loehnert T.-H."/>
            <person name="Nordsiek G."/>
            <person name="Reichelt J."/>
            <person name="Scharfe M."/>
            <person name="Schoen O."/>
            <person name="Bargues M."/>
            <person name="Terol J."/>
            <person name="Climent J."/>
            <person name="Navarro P."/>
            <person name="Collado C."/>
            <person name="Perez-Perez A."/>
            <person name="Ottenwaelder B."/>
            <person name="Duchemin D."/>
            <person name="Cooke R."/>
            <person name="Laudie M."/>
            <person name="Berger-Llauro C."/>
            <person name="Purnelle B."/>
            <person name="Masuy D."/>
            <person name="de Haan M."/>
            <person name="Maarse A.C."/>
            <person name="Alcaraz J.-P."/>
            <person name="Cottet A."/>
            <person name="Casacuberta E."/>
            <person name="Monfort A."/>
            <person name="Argiriou A."/>
            <person name="Flores M."/>
            <person name="Liguori R."/>
            <person name="Vitale D."/>
            <person name="Mannhaupt G."/>
            <person name="Haase D."/>
            <person name="Schoof H."/>
            <person name="Rudd S."/>
            <person name="Zaccaria P."/>
            <person name="Mewes H.-W."/>
            <person name="Mayer K.F.X."/>
            <person name="Kaul S."/>
            <person name="Town C.D."/>
            <person name="Koo H.L."/>
            <person name="Tallon L.J."/>
            <person name="Jenkins J."/>
            <person name="Rooney T."/>
            <person name="Rizzo M."/>
            <person name="Walts A."/>
            <person name="Utterback T."/>
            <person name="Fujii C.Y."/>
            <person name="Shea T.P."/>
            <person name="Creasy T.H."/>
            <person name="Haas B."/>
            <person name="Maiti R."/>
            <person name="Wu D."/>
            <person name="Peterson J."/>
            <person name="Van Aken S."/>
            <person name="Pai G."/>
            <person name="Militscher J."/>
            <person name="Sellers P."/>
            <person name="Gill J.E."/>
            <person name="Feldblyum T.V."/>
            <person name="Preuss D."/>
            <person name="Lin X."/>
            <person name="Nierman W.C."/>
            <person name="Salzberg S.L."/>
            <person name="White O."/>
            <person name="Venter J.C."/>
            <person name="Fraser C.M."/>
            <person name="Kaneko T."/>
            <person name="Nakamura Y."/>
            <person name="Sato S."/>
            <person name="Kato T."/>
            <person name="Asamizu E."/>
            <person name="Sasamoto S."/>
            <person name="Kimura T."/>
            <person name="Idesawa K."/>
            <person name="Kawashima K."/>
            <person name="Kishida Y."/>
            <person name="Kiyokawa C."/>
            <person name="Kohara M."/>
            <person name="Matsumoto M."/>
            <person name="Matsuno A."/>
            <person name="Muraki A."/>
            <person name="Nakayama S."/>
            <person name="Nakazaki N."/>
            <person name="Shinpo S."/>
            <person name="Takeuchi C."/>
            <person name="Wada T."/>
            <person name="Watanabe A."/>
            <person name="Yamada M."/>
            <person name="Yasuda M."/>
            <person name="Tabata S."/>
        </authorList>
    </citation>
    <scope>NUCLEOTIDE SEQUENCE [LARGE SCALE GENOMIC DNA]</scope>
    <source>
        <strain>cv. Columbia</strain>
    </source>
</reference>
<reference key="2">
    <citation type="journal article" date="2017" name="Plant J.">
        <title>Araport11: a complete reannotation of the Arabidopsis thaliana reference genome.</title>
        <authorList>
            <person name="Cheng C.Y."/>
            <person name="Krishnakumar V."/>
            <person name="Chan A.P."/>
            <person name="Thibaud-Nissen F."/>
            <person name="Schobel S."/>
            <person name="Town C.D."/>
        </authorList>
    </citation>
    <scope>GENOME REANNOTATION</scope>
    <source>
        <strain>cv. Columbia</strain>
    </source>
</reference>
<reference key="3">
    <citation type="journal article" date="2003" name="Science">
        <title>Empirical analysis of transcriptional activity in the Arabidopsis genome.</title>
        <authorList>
            <person name="Yamada K."/>
            <person name="Lim J."/>
            <person name="Dale J.M."/>
            <person name="Chen H."/>
            <person name="Shinn P."/>
            <person name="Palm C.J."/>
            <person name="Southwick A.M."/>
            <person name="Wu H.C."/>
            <person name="Kim C.J."/>
            <person name="Nguyen M."/>
            <person name="Pham P.K."/>
            <person name="Cheuk R.F."/>
            <person name="Karlin-Newmann G."/>
            <person name="Liu S.X."/>
            <person name="Lam B."/>
            <person name="Sakano H."/>
            <person name="Wu T."/>
            <person name="Yu G."/>
            <person name="Miranda M."/>
            <person name="Quach H.L."/>
            <person name="Tripp M."/>
            <person name="Chang C.H."/>
            <person name="Lee J.M."/>
            <person name="Toriumi M.J."/>
            <person name="Chan M.M."/>
            <person name="Tang C.C."/>
            <person name="Onodera C.S."/>
            <person name="Deng J.M."/>
            <person name="Akiyama K."/>
            <person name="Ansari Y."/>
            <person name="Arakawa T."/>
            <person name="Banh J."/>
            <person name="Banno F."/>
            <person name="Bowser L."/>
            <person name="Brooks S.Y."/>
            <person name="Carninci P."/>
            <person name="Chao Q."/>
            <person name="Choy N."/>
            <person name="Enju A."/>
            <person name="Goldsmith A.D."/>
            <person name="Gurjal M."/>
            <person name="Hansen N.F."/>
            <person name="Hayashizaki Y."/>
            <person name="Johnson-Hopson C."/>
            <person name="Hsuan V.W."/>
            <person name="Iida K."/>
            <person name="Karnes M."/>
            <person name="Khan S."/>
            <person name="Koesema E."/>
            <person name="Ishida J."/>
            <person name="Jiang P.X."/>
            <person name="Jones T."/>
            <person name="Kawai J."/>
            <person name="Kamiya A."/>
            <person name="Meyers C."/>
            <person name="Nakajima M."/>
            <person name="Narusaka M."/>
            <person name="Seki M."/>
            <person name="Sakurai T."/>
            <person name="Satou M."/>
            <person name="Tamse R."/>
            <person name="Vaysberg M."/>
            <person name="Wallender E.K."/>
            <person name="Wong C."/>
            <person name="Yamamura Y."/>
            <person name="Yuan S."/>
            <person name="Shinozaki K."/>
            <person name="Davis R.W."/>
            <person name="Theologis A."/>
            <person name="Ecker J.R."/>
        </authorList>
    </citation>
    <scope>NUCLEOTIDE SEQUENCE [LARGE SCALE MRNA]</scope>
    <source>
        <strain>cv. Columbia</strain>
    </source>
</reference>
<reference key="4">
    <citation type="journal article" date="2007" name="Plant Cell">
        <title>A feedback regulatory module formed by LITTLE ZIPPER and HD-ZIPIII genes.</title>
        <authorList>
            <person name="Wenkel S."/>
            <person name="Emery J."/>
            <person name="Hou B.H."/>
            <person name="Evans M.M."/>
            <person name="Barton M.K."/>
        </authorList>
    </citation>
    <scope>GENE FAMILY</scope>
    <scope>NOMENCLATURE</scope>
    <scope>INDUCTION</scope>
    <scope>TISSUE SPECIFICITY</scope>
    <scope>INTERACTION WITH REV</scope>
</reference>
<reference key="5">
    <citation type="journal article" date="2008" name="Plant Cell">
        <title>HD-ZIP III activity is modulated by competitive inhibitors via a feedback loop in Arabidopsis shoot apical meristem development.</title>
        <authorList>
            <person name="Kim Y.S."/>
            <person name="Kim S.G."/>
            <person name="Lee M."/>
            <person name="Lee I."/>
            <person name="Park H.Y."/>
            <person name="Seo P.J."/>
            <person name="Jung J.H."/>
            <person name="Kwon E.J."/>
            <person name="Suh S.W."/>
            <person name="Paek K.H."/>
            <person name="Park C.M."/>
        </authorList>
    </citation>
    <scope>FUNCTION</scope>
    <scope>INTERACTION WITH REV; ATBH-8; ATBH-9; ATB-14 AND ATB-15</scope>
    <scope>INDUCTION BY ATHB-14</scope>
    <scope>SUBCELLULAR LOCATION</scope>
    <scope>TISSUE SPECIFICITY</scope>
    <scope>DISRUPTION PHENOTYPE</scope>
</reference>
<reference key="6">
    <citation type="journal article" date="2011" name="EMBO Rep.">
        <title>Regulation of protein function by 'microProteins'.</title>
        <authorList>
            <person name="Staudt A.C."/>
            <person name="Wenkel S."/>
        </authorList>
    </citation>
    <scope>REVIEW</scope>
</reference>
<reference key="7">
    <citation type="journal article" date="2013" name="Mech. Dev.">
        <title>Control of stem cell homeostasis via interlocking microRNA and microProtein feedback loops.</title>
        <authorList>
            <person name="Brandt R."/>
            <person name="Xie Y."/>
            <person name="Musielak T."/>
            <person name="Graeff M."/>
            <person name="Stierhof Y.D."/>
            <person name="Huang H."/>
            <person name="Liu C.M."/>
            <person name="Wenkel S."/>
        </authorList>
    </citation>
    <scope>INDUCTION BY REV</scope>
</reference>
<reference key="8">
    <citation type="journal article" date="2014" name="Mol. Phylogenet. Evol.">
        <title>Origin of a novel regulatory module by duplication and degeneration of an ancient plant transcription factor.</title>
        <authorList>
            <person name="Floyd S.K."/>
            <person name="Ryan J.G."/>
            <person name="Conway S.J."/>
            <person name="Brenner E."/>
            <person name="Burris K.P."/>
            <person name="Burris J.N."/>
            <person name="Chen T."/>
            <person name="Edger P.P."/>
            <person name="Graham S.W."/>
            <person name="Leebens-Mack J.H."/>
            <person name="Pires J.C."/>
            <person name="Rothfels C.J."/>
            <person name="Sigel E.M."/>
            <person name="Stevenson D.W."/>
            <person name="Neal Stewart C. Jr."/>
            <person name="Wong G.K."/>
            <person name="Bowman J.L."/>
        </authorList>
    </citation>
    <scope>GENE FAMILY</scope>
</reference>
<comment type="function">
    <text evidence="4">Competitive inhibitor of the HD-ZIPIII transcription factors in shoot apical meristem (SAM) development. Acts by forming non-functional heterodimers. Part of a negative feedback loop. Involved in SAM development and lateral organ patterning. Essential for proper functioning of stem cells in the SAM.</text>
</comment>
<comment type="subunit">
    <text evidence="3 4">Interacts with REV (PubMed:18055602, PubMed:18408069). Interacts with ATBH-8, ATBH-9, ATB-14 and ATB-15 (PubMed:18408069).</text>
</comment>
<comment type="subcellular location">
    <subcellularLocation>
        <location evidence="4">Nucleus</location>
    </subcellularLocation>
</comment>
<comment type="tissue specificity">
    <text evidence="3">Expressed in the adaxial epidermis of the cotyledons and leaves, and in the vascular cylinder of wild-type torpedo stage embryos. Confined in the central zone and the organizing center in the shoot apical meristem.</text>
</comment>
<comment type="induction">
    <text evidence="3 4 5">Up-regulated in response to increased HD-ZIPIII activity (PubMed:18055602). Up-regulated by ATHB-14 (PubMed:18408069). Up-regulated by REV (PubMed:22781836).</text>
</comment>
<comment type="disruption phenotype">
    <text evidence="4">No visible phenotype during the vegetative growth. Disrupted activities of the shoot apical meristem and/or axillary meristems after the transition to reproductive growth. Zpr3 and zpr4 double mutants exhibit homeotic transformation and ectopic meristem activity.</text>
</comment>
<proteinExistence type="evidence at protein level"/>
<dbReference type="EMBL" id="AL353912">
    <property type="protein sequence ID" value="CAB89238.1"/>
    <property type="molecule type" value="Genomic_DNA"/>
</dbReference>
<dbReference type="EMBL" id="CP002686">
    <property type="protein sequence ID" value="AEE78991.1"/>
    <property type="molecule type" value="Genomic_DNA"/>
</dbReference>
<dbReference type="EMBL" id="AY065450">
    <property type="protein sequence ID" value="AAL38891.1"/>
    <property type="molecule type" value="mRNA"/>
</dbReference>
<dbReference type="EMBL" id="AY123017">
    <property type="protein sequence ID" value="AAM67550.1"/>
    <property type="molecule type" value="mRNA"/>
</dbReference>
<dbReference type="PIR" id="T49030">
    <property type="entry name" value="T49030"/>
</dbReference>
<dbReference type="RefSeq" id="NP_190845.1">
    <property type="nucleotide sequence ID" value="NM_115137.4"/>
</dbReference>
<dbReference type="SMR" id="Q9LXI8"/>
<dbReference type="FunCoup" id="Q9LXI8">
    <property type="interactions" value="39"/>
</dbReference>
<dbReference type="STRING" id="3702.Q9LXI8"/>
<dbReference type="PaxDb" id="3702-AT3G52770.1"/>
<dbReference type="EnsemblPlants" id="AT3G52770.1">
    <property type="protein sequence ID" value="AT3G52770.1"/>
    <property type="gene ID" value="AT3G52770"/>
</dbReference>
<dbReference type="GeneID" id="824443"/>
<dbReference type="Gramene" id="AT3G52770.1">
    <property type="protein sequence ID" value="AT3G52770.1"/>
    <property type="gene ID" value="AT3G52770"/>
</dbReference>
<dbReference type="KEGG" id="ath:AT3G52770"/>
<dbReference type="Araport" id="AT3G52770"/>
<dbReference type="TAIR" id="AT3G52770">
    <property type="gene designation" value="ZPR3"/>
</dbReference>
<dbReference type="eggNOG" id="ENOG502S7K6">
    <property type="taxonomic scope" value="Eukaryota"/>
</dbReference>
<dbReference type="HOGENOM" id="CLU_158233_2_0_1"/>
<dbReference type="InParanoid" id="Q9LXI8"/>
<dbReference type="OMA" id="CHMIKEN"/>
<dbReference type="PRO" id="PR:Q9LXI8"/>
<dbReference type="Proteomes" id="UP000006548">
    <property type="component" value="Chromosome 3"/>
</dbReference>
<dbReference type="ExpressionAtlas" id="Q9LXI8">
    <property type="expression patterns" value="baseline and differential"/>
</dbReference>
<dbReference type="GO" id="GO:0005634">
    <property type="term" value="C:nucleus"/>
    <property type="evidence" value="ECO:0000314"/>
    <property type="project" value="TAIR"/>
</dbReference>
<dbReference type="GO" id="GO:0009943">
    <property type="term" value="P:adaxial/abaxial axis specification"/>
    <property type="evidence" value="ECO:0000315"/>
    <property type="project" value="TAIR"/>
</dbReference>
<dbReference type="GO" id="GO:0010358">
    <property type="term" value="P:leaf shaping"/>
    <property type="evidence" value="ECO:0000315"/>
    <property type="project" value="TAIR"/>
</dbReference>
<dbReference type="GO" id="GO:0010305">
    <property type="term" value="P:leaf vascular tissue pattern formation"/>
    <property type="evidence" value="ECO:0000315"/>
    <property type="project" value="TAIR"/>
</dbReference>
<dbReference type="GO" id="GO:0010073">
    <property type="term" value="P:meristem maintenance"/>
    <property type="evidence" value="ECO:0000316"/>
    <property type="project" value="TAIR"/>
</dbReference>
<dbReference type="GO" id="GO:0043433">
    <property type="term" value="P:negative regulation of DNA-binding transcription factor activity"/>
    <property type="evidence" value="ECO:0000353"/>
    <property type="project" value="TAIR"/>
</dbReference>
<dbReference type="GO" id="GO:0010075">
    <property type="term" value="P:regulation of meristem growth"/>
    <property type="evidence" value="ECO:0000315"/>
    <property type="project" value="TAIR"/>
</dbReference>
<dbReference type="InterPro" id="IPR039312">
    <property type="entry name" value="ZPR"/>
</dbReference>
<dbReference type="PANTHER" id="PTHR33601:SF33">
    <property type="entry name" value="PROTEIN LITTLE ZIPPER 3"/>
    <property type="match status" value="1"/>
</dbReference>
<dbReference type="PANTHER" id="PTHR33601">
    <property type="entry name" value="PROTEIN LITTLE ZIPPER 4"/>
    <property type="match status" value="1"/>
</dbReference>
<organism evidence="9">
    <name type="scientific">Arabidopsis thaliana</name>
    <name type="common">Mouse-ear cress</name>
    <dbReference type="NCBI Taxonomy" id="3702"/>
    <lineage>
        <taxon>Eukaryota</taxon>
        <taxon>Viridiplantae</taxon>
        <taxon>Streptophyta</taxon>
        <taxon>Embryophyta</taxon>
        <taxon>Tracheophyta</taxon>
        <taxon>Spermatophyta</taxon>
        <taxon>Magnoliopsida</taxon>
        <taxon>eudicotyledons</taxon>
        <taxon>Gunneridae</taxon>
        <taxon>Pentapetalae</taxon>
        <taxon>rosids</taxon>
        <taxon>malvids</taxon>
        <taxon>Brassicales</taxon>
        <taxon>Brassicaceae</taxon>
        <taxon>Camelineae</taxon>
        <taxon>Arabidopsis</taxon>
    </lineage>
</organism>
<evidence type="ECO:0000255" key="1"/>
<evidence type="ECO:0000256" key="2">
    <source>
        <dbReference type="SAM" id="MobiDB-lite"/>
    </source>
</evidence>
<evidence type="ECO:0000269" key="3">
    <source>
    </source>
</evidence>
<evidence type="ECO:0000269" key="4">
    <source>
    </source>
</evidence>
<evidence type="ECO:0000269" key="5">
    <source>
    </source>
</evidence>
<evidence type="ECO:0000303" key="6">
    <source>
    </source>
</evidence>
<evidence type="ECO:0000312" key="7">
    <source>
        <dbReference type="Araport" id="AT3G52770"/>
    </source>
</evidence>
<evidence type="ECO:0000312" key="8">
    <source>
        <dbReference type="EMBL" id="CAB89238.1"/>
    </source>
</evidence>
<evidence type="ECO:0000312" key="9">
    <source>
        <dbReference type="Proteomes" id="UP000006548"/>
    </source>
</evidence>
<accession>Q9LXI8</accession>
<name>ZPR3_ARATH</name>
<gene>
    <name evidence="6" type="primary">ZPR3</name>
    <name evidence="7" type="ordered locus">At3g52770</name>
    <name evidence="8" type="ORF">F3C22.170</name>
</gene>
<sequence>MERLNSKLFVENCYIMKENERLRKKAELLNQENQQLLFQLKQKLSKTKNSNNGSNNDNKSSSASGQS</sequence>
<protein>
    <recommendedName>
        <fullName evidence="6">Protein LITTLE ZIPPER 3</fullName>
    </recommendedName>
</protein>
<keyword id="KW-0175">Coiled coil</keyword>
<keyword id="KW-0539">Nucleus</keyword>
<keyword id="KW-1185">Reference proteome</keyword>
<keyword id="KW-0804">Transcription</keyword>
<keyword id="KW-0805">Transcription regulation</keyword>